<comment type="function">
    <text evidence="1">Catalyzes the reversible reaction in which hydroxymethyl group from 5,10-methylenetetrahydrofolate is transferred onto alpha-ketoisovalerate to form ketopantoate.</text>
</comment>
<comment type="catalytic activity">
    <reaction evidence="1">
        <text>3-methyl-2-oxobutanoate + (6R)-5,10-methylene-5,6,7,8-tetrahydrofolate + H2O = 2-dehydropantoate + (6S)-5,6,7,8-tetrahydrofolate</text>
        <dbReference type="Rhea" id="RHEA:11824"/>
        <dbReference type="ChEBI" id="CHEBI:11561"/>
        <dbReference type="ChEBI" id="CHEBI:11851"/>
        <dbReference type="ChEBI" id="CHEBI:15377"/>
        <dbReference type="ChEBI" id="CHEBI:15636"/>
        <dbReference type="ChEBI" id="CHEBI:57453"/>
        <dbReference type="EC" id="2.1.2.11"/>
    </reaction>
</comment>
<comment type="cofactor">
    <cofactor evidence="1">
        <name>Mg(2+)</name>
        <dbReference type="ChEBI" id="CHEBI:18420"/>
    </cofactor>
    <text evidence="1">Binds 1 Mg(2+) ion per subunit.</text>
</comment>
<comment type="pathway">
    <text evidence="1">Cofactor biosynthesis; (R)-pantothenate biosynthesis; (R)-pantoate from 3-methyl-2-oxobutanoate: step 1/2.</text>
</comment>
<comment type="subunit">
    <text evidence="1">Homodecamer; pentamer of dimers.</text>
</comment>
<comment type="subcellular location">
    <subcellularLocation>
        <location evidence="1">Cytoplasm</location>
    </subcellularLocation>
</comment>
<comment type="similarity">
    <text evidence="1">Belongs to the PanB family.</text>
</comment>
<gene>
    <name evidence="1" type="primary">panB</name>
    <name type="ordered locus">PHZ_c1533</name>
</gene>
<keyword id="KW-0963">Cytoplasm</keyword>
<keyword id="KW-0460">Magnesium</keyword>
<keyword id="KW-0479">Metal-binding</keyword>
<keyword id="KW-0566">Pantothenate biosynthesis</keyword>
<keyword id="KW-1185">Reference proteome</keyword>
<keyword id="KW-0808">Transferase</keyword>
<evidence type="ECO:0000255" key="1">
    <source>
        <dbReference type="HAMAP-Rule" id="MF_00156"/>
    </source>
</evidence>
<feature type="chain" id="PRO_1000096990" description="3-methyl-2-oxobutanoate hydroxymethyltransferase">
    <location>
        <begin position="1"/>
        <end position="275"/>
    </location>
</feature>
<feature type="active site" description="Proton acceptor" evidence="1">
    <location>
        <position position="189"/>
    </location>
</feature>
<feature type="binding site" evidence="1">
    <location>
        <begin position="51"/>
        <end position="52"/>
    </location>
    <ligand>
        <name>3-methyl-2-oxobutanoate</name>
        <dbReference type="ChEBI" id="CHEBI:11851"/>
    </ligand>
</feature>
<feature type="binding site" evidence="1">
    <location>
        <position position="51"/>
    </location>
    <ligand>
        <name>Mg(2+)</name>
        <dbReference type="ChEBI" id="CHEBI:18420"/>
    </ligand>
</feature>
<feature type="binding site" evidence="1">
    <location>
        <position position="90"/>
    </location>
    <ligand>
        <name>3-methyl-2-oxobutanoate</name>
        <dbReference type="ChEBI" id="CHEBI:11851"/>
    </ligand>
</feature>
<feature type="binding site" evidence="1">
    <location>
        <position position="90"/>
    </location>
    <ligand>
        <name>Mg(2+)</name>
        <dbReference type="ChEBI" id="CHEBI:18420"/>
    </ligand>
</feature>
<feature type="binding site" evidence="1">
    <location>
        <position position="120"/>
    </location>
    <ligand>
        <name>3-methyl-2-oxobutanoate</name>
        <dbReference type="ChEBI" id="CHEBI:11851"/>
    </ligand>
</feature>
<feature type="binding site" evidence="1">
    <location>
        <position position="122"/>
    </location>
    <ligand>
        <name>Mg(2+)</name>
        <dbReference type="ChEBI" id="CHEBI:18420"/>
    </ligand>
</feature>
<dbReference type="EC" id="2.1.2.11" evidence="1"/>
<dbReference type="EMBL" id="CP000747">
    <property type="protein sequence ID" value="ACG77944.1"/>
    <property type="molecule type" value="Genomic_DNA"/>
</dbReference>
<dbReference type="RefSeq" id="WP_012522087.1">
    <property type="nucleotide sequence ID" value="NC_011144.1"/>
</dbReference>
<dbReference type="SMR" id="B4RAD7"/>
<dbReference type="STRING" id="450851.PHZ_c1533"/>
<dbReference type="KEGG" id="pzu:PHZ_c1533"/>
<dbReference type="eggNOG" id="COG0413">
    <property type="taxonomic scope" value="Bacteria"/>
</dbReference>
<dbReference type="HOGENOM" id="CLU_036645_1_0_5"/>
<dbReference type="OrthoDB" id="9781789at2"/>
<dbReference type="UniPathway" id="UPA00028">
    <property type="reaction ID" value="UER00003"/>
</dbReference>
<dbReference type="Proteomes" id="UP000001868">
    <property type="component" value="Chromosome"/>
</dbReference>
<dbReference type="GO" id="GO:0005737">
    <property type="term" value="C:cytoplasm"/>
    <property type="evidence" value="ECO:0007669"/>
    <property type="project" value="UniProtKB-SubCell"/>
</dbReference>
<dbReference type="GO" id="GO:0003864">
    <property type="term" value="F:3-methyl-2-oxobutanoate hydroxymethyltransferase activity"/>
    <property type="evidence" value="ECO:0007669"/>
    <property type="project" value="UniProtKB-UniRule"/>
</dbReference>
<dbReference type="GO" id="GO:0000287">
    <property type="term" value="F:magnesium ion binding"/>
    <property type="evidence" value="ECO:0007669"/>
    <property type="project" value="TreeGrafter"/>
</dbReference>
<dbReference type="GO" id="GO:0015940">
    <property type="term" value="P:pantothenate biosynthetic process"/>
    <property type="evidence" value="ECO:0007669"/>
    <property type="project" value="UniProtKB-UniRule"/>
</dbReference>
<dbReference type="CDD" id="cd06557">
    <property type="entry name" value="KPHMT-like"/>
    <property type="match status" value="1"/>
</dbReference>
<dbReference type="FunFam" id="3.20.20.60:FF:000003">
    <property type="entry name" value="3-methyl-2-oxobutanoate hydroxymethyltransferase"/>
    <property type="match status" value="1"/>
</dbReference>
<dbReference type="Gene3D" id="3.20.20.60">
    <property type="entry name" value="Phosphoenolpyruvate-binding domains"/>
    <property type="match status" value="1"/>
</dbReference>
<dbReference type="HAMAP" id="MF_00156">
    <property type="entry name" value="PanB"/>
    <property type="match status" value="1"/>
</dbReference>
<dbReference type="InterPro" id="IPR003700">
    <property type="entry name" value="Pantoate_hydroxy_MeTrfase"/>
</dbReference>
<dbReference type="InterPro" id="IPR015813">
    <property type="entry name" value="Pyrv/PenolPyrv_kinase-like_dom"/>
</dbReference>
<dbReference type="InterPro" id="IPR040442">
    <property type="entry name" value="Pyrv_kinase-like_dom_sf"/>
</dbReference>
<dbReference type="NCBIfam" id="TIGR00222">
    <property type="entry name" value="panB"/>
    <property type="match status" value="1"/>
</dbReference>
<dbReference type="NCBIfam" id="NF001452">
    <property type="entry name" value="PRK00311.1"/>
    <property type="match status" value="1"/>
</dbReference>
<dbReference type="PANTHER" id="PTHR20881">
    <property type="entry name" value="3-METHYL-2-OXOBUTANOATE HYDROXYMETHYLTRANSFERASE"/>
    <property type="match status" value="1"/>
</dbReference>
<dbReference type="PANTHER" id="PTHR20881:SF0">
    <property type="entry name" value="3-METHYL-2-OXOBUTANOATE HYDROXYMETHYLTRANSFERASE"/>
    <property type="match status" value="1"/>
</dbReference>
<dbReference type="Pfam" id="PF02548">
    <property type="entry name" value="Pantoate_transf"/>
    <property type="match status" value="1"/>
</dbReference>
<dbReference type="PIRSF" id="PIRSF000388">
    <property type="entry name" value="Pantoate_hydroxy_MeTrfase"/>
    <property type="match status" value="1"/>
</dbReference>
<dbReference type="SUPFAM" id="SSF51621">
    <property type="entry name" value="Phosphoenolpyruvate/pyruvate domain"/>
    <property type="match status" value="1"/>
</dbReference>
<sequence length="275" mass="29231">MSSHREEKVRRIAAPDIAARKGGTPIVCLTAYTAPVAELLDEHCDLLLVGDSVGMVVHGLPNTVGVTLDMMILHGQAVMRGSRRAMVVVDMPFGSYEGAPETAYDNAARLMKETGAQAVKVESGPTVIDTIQYLVKRGIPVMGHVGLRPQAVLVDGGFKAKGKAGEERRRILEEARATADAGAFAVVVEGVAEGLAREITEAIEVPTIGIGASAGCDGQILVTDDMLGLFDWTPKFVRRYGDLRGEIGKAVAAYAEDVRARRFPGPAEIYFAKAG</sequence>
<organism>
    <name type="scientific">Phenylobacterium zucineum (strain HLK1)</name>
    <dbReference type="NCBI Taxonomy" id="450851"/>
    <lineage>
        <taxon>Bacteria</taxon>
        <taxon>Pseudomonadati</taxon>
        <taxon>Pseudomonadota</taxon>
        <taxon>Alphaproteobacteria</taxon>
        <taxon>Caulobacterales</taxon>
        <taxon>Caulobacteraceae</taxon>
        <taxon>Phenylobacterium</taxon>
    </lineage>
</organism>
<protein>
    <recommendedName>
        <fullName evidence="1">3-methyl-2-oxobutanoate hydroxymethyltransferase</fullName>
        <ecNumber evidence="1">2.1.2.11</ecNumber>
    </recommendedName>
    <alternativeName>
        <fullName evidence="1">Ketopantoate hydroxymethyltransferase</fullName>
        <shortName evidence="1">KPHMT</shortName>
    </alternativeName>
</protein>
<reference key="1">
    <citation type="journal article" date="2008" name="BMC Genomics">
        <title>Complete genome of Phenylobacterium zucineum - a novel facultative intracellular bacterium isolated from human erythroleukemia cell line K562.</title>
        <authorList>
            <person name="Luo Y."/>
            <person name="Xu X."/>
            <person name="Ding Z."/>
            <person name="Liu Z."/>
            <person name="Zhang B."/>
            <person name="Yan Z."/>
            <person name="Sun J."/>
            <person name="Hu S."/>
            <person name="Hu X."/>
        </authorList>
    </citation>
    <scope>NUCLEOTIDE SEQUENCE [LARGE SCALE GENOMIC DNA]</scope>
    <source>
        <strain>HLK1</strain>
    </source>
</reference>
<accession>B4RAD7</accession>
<name>PANB_PHEZH</name>
<proteinExistence type="inferred from homology"/>